<feature type="chain" id="PRO_0000339850" description="UPF0597 protein Sputcn32_1209">
    <location>
        <begin position="1"/>
        <end position="424"/>
    </location>
</feature>
<protein>
    <recommendedName>
        <fullName evidence="1">UPF0597 protein Sputcn32_1209</fullName>
    </recommendedName>
</protein>
<comment type="similarity">
    <text evidence="1">Belongs to the UPF0597 family.</text>
</comment>
<proteinExistence type="inferred from homology"/>
<gene>
    <name type="ordered locus">Sputcn32_1209</name>
</gene>
<evidence type="ECO:0000255" key="1">
    <source>
        <dbReference type="HAMAP-Rule" id="MF_01845"/>
    </source>
</evidence>
<reference key="1">
    <citation type="submission" date="2007-04" db="EMBL/GenBank/DDBJ databases">
        <title>Complete sequence of Shewanella putrefaciens CN-32.</title>
        <authorList>
            <consortium name="US DOE Joint Genome Institute"/>
            <person name="Copeland A."/>
            <person name="Lucas S."/>
            <person name="Lapidus A."/>
            <person name="Barry K."/>
            <person name="Detter J.C."/>
            <person name="Glavina del Rio T."/>
            <person name="Hammon N."/>
            <person name="Israni S."/>
            <person name="Dalin E."/>
            <person name="Tice H."/>
            <person name="Pitluck S."/>
            <person name="Chain P."/>
            <person name="Malfatti S."/>
            <person name="Shin M."/>
            <person name="Vergez L."/>
            <person name="Schmutz J."/>
            <person name="Larimer F."/>
            <person name="Land M."/>
            <person name="Hauser L."/>
            <person name="Kyrpides N."/>
            <person name="Mikhailova N."/>
            <person name="Romine M.F."/>
            <person name="Fredrickson J."/>
            <person name="Tiedje J."/>
            <person name="Richardson P."/>
        </authorList>
    </citation>
    <scope>NUCLEOTIDE SEQUENCE [LARGE SCALE GENOMIC DNA]</scope>
    <source>
        <strain>CN-32 / ATCC BAA-453</strain>
    </source>
</reference>
<name>Y1209_SHEPC</name>
<accession>A4Y4Q4</accession>
<sequence length="424" mass="44039">MNPLWQQYIQILNQVVKPALGCTEPIAAAYASAVARTLLGIVPEAISVQVSDNLYKNSMGVYVPGTGKIGLAIAAAAGAIAGNAEAGLEVLAAITPEQVAQAQDLIDAGKVKVERTETEEFIYCCVTLKAGEQEALVKICGGHTLIAEKRLNGEPVFTADNAQSAATGSICDGIDISIKSIYQFAQEVPFDQIKFILKASELNGKLSDEGMAKPYGLEVGRTMKSGIAAGIIGEDLLNKIVMLTAAASDARMGGANLPAMSNLGSGNQGIAATIPVVLTAQCYNVTEEKLARALIMSHLGAIYIKSHYPPLSAFCGNTVTSAAASMAMVYIAGGSFEQSCFAIQNVISDSSGMVCDGAKASCAMKVSTSSSAAVRSFLMALNSQNVSGQGIIATDVEKTIKNIGKMILNGMSSTDITIIDIMST</sequence>
<dbReference type="EMBL" id="CP000681">
    <property type="protein sequence ID" value="ABP74937.1"/>
    <property type="molecule type" value="Genomic_DNA"/>
</dbReference>
<dbReference type="SMR" id="A4Y4Q4"/>
<dbReference type="STRING" id="319224.Sputcn32_1209"/>
<dbReference type="KEGG" id="spc:Sputcn32_1209"/>
<dbReference type="eggNOG" id="COG3681">
    <property type="taxonomic scope" value="Bacteria"/>
</dbReference>
<dbReference type="HOGENOM" id="CLU_051840_0_0_6"/>
<dbReference type="GO" id="GO:0080146">
    <property type="term" value="F:L-cysteine desulfhydrase activity"/>
    <property type="evidence" value="ECO:0007669"/>
    <property type="project" value="TreeGrafter"/>
</dbReference>
<dbReference type="GO" id="GO:0019450">
    <property type="term" value="P:L-cysteine catabolic process to pyruvate"/>
    <property type="evidence" value="ECO:0007669"/>
    <property type="project" value="TreeGrafter"/>
</dbReference>
<dbReference type="HAMAP" id="MF_01845">
    <property type="entry name" value="UPF0597"/>
    <property type="match status" value="1"/>
</dbReference>
<dbReference type="InterPro" id="IPR005130">
    <property type="entry name" value="Ser_deHydtase-like_asu"/>
</dbReference>
<dbReference type="InterPro" id="IPR021144">
    <property type="entry name" value="UPF0597"/>
</dbReference>
<dbReference type="PANTHER" id="PTHR30501">
    <property type="entry name" value="UPF0597 PROTEIN YHAM"/>
    <property type="match status" value="1"/>
</dbReference>
<dbReference type="PANTHER" id="PTHR30501:SF2">
    <property type="entry name" value="UPF0597 PROTEIN YHAM"/>
    <property type="match status" value="1"/>
</dbReference>
<dbReference type="Pfam" id="PF03313">
    <property type="entry name" value="SDH_alpha"/>
    <property type="match status" value="1"/>
</dbReference>
<dbReference type="PIRSF" id="PIRSF006054">
    <property type="entry name" value="UCP006054"/>
    <property type="match status" value="1"/>
</dbReference>
<organism>
    <name type="scientific">Shewanella putrefaciens (strain CN-32 / ATCC BAA-453)</name>
    <dbReference type="NCBI Taxonomy" id="319224"/>
    <lineage>
        <taxon>Bacteria</taxon>
        <taxon>Pseudomonadati</taxon>
        <taxon>Pseudomonadota</taxon>
        <taxon>Gammaproteobacteria</taxon>
        <taxon>Alteromonadales</taxon>
        <taxon>Shewanellaceae</taxon>
        <taxon>Shewanella</taxon>
    </lineage>
</organism>